<dbReference type="EC" id="2.7.4.6" evidence="1"/>
<dbReference type="EC" id="2.7.13.3" evidence="1"/>
<dbReference type="EMBL" id="AB207045">
    <property type="protein sequence ID" value="BAD97838.1"/>
    <property type="molecule type" value="mRNA"/>
</dbReference>
<dbReference type="RefSeq" id="NP_001019809.1">
    <property type="nucleotide sequence ID" value="NM_001024638.1"/>
</dbReference>
<dbReference type="RefSeq" id="XP_005624399.1">
    <property type="nucleotide sequence ID" value="XM_005624342.2"/>
</dbReference>
<dbReference type="RefSeq" id="XP_038530953.1">
    <property type="nucleotide sequence ID" value="XM_038675025.1"/>
</dbReference>
<dbReference type="SMR" id="Q50KA8"/>
<dbReference type="FunCoup" id="Q50KA8">
    <property type="interactions" value="1674"/>
</dbReference>
<dbReference type="STRING" id="9615.ENSCAFP00000025504"/>
<dbReference type="PaxDb" id="9615-ENSCAFP00000025504"/>
<dbReference type="Ensembl" id="ENSCAFT00000069717.2">
    <property type="protein sequence ID" value="ENSCAFP00000045002.2"/>
    <property type="gene ID" value="ENSCAFG00000050078.2"/>
</dbReference>
<dbReference type="GeneID" id="480559"/>
<dbReference type="KEGG" id="cfa:480559"/>
<dbReference type="CTD" id="4831"/>
<dbReference type="InParanoid" id="Q50KA8"/>
<dbReference type="OrthoDB" id="2162449at2759"/>
<dbReference type="Reactome" id="R-CFA-499943">
    <property type="pathway name" value="Interconversion of nucleotide di- and triphosphates"/>
</dbReference>
<dbReference type="Reactome" id="R-CFA-6798695">
    <property type="pathway name" value="Neutrophil degranulation"/>
</dbReference>
<dbReference type="Reactome" id="R-CFA-9748787">
    <property type="pathway name" value="Azathioprine ADME"/>
</dbReference>
<dbReference type="Reactome" id="R-CFA-9755088">
    <property type="pathway name" value="Ribavirin ADME"/>
</dbReference>
<dbReference type="Proteomes" id="UP000002254">
    <property type="component" value="Chromosome 9"/>
</dbReference>
<dbReference type="Proteomes" id="UP000694429">
    <property type="component" value="Unplaced"/>
</dbReference>
<dbReference type="Proteomes" id="UP000694542">
    <property type="component" value="Unplaced"/>
</dbReference>
<dbReference type="Proteomes" id="UP000805418">
    <property type="component" value="Unplaced"/>
</dbReference>
<dbReference type="GO" id="GO:0071944">
    <property type="term" value="C:cell periphery"/>
    <property type="evidence" value="ECO:0000250"/>
    <property type="project" value="UniProtKB"/>
</dbReference>
<dbReference type="GO" id="GO:0005737">
    <property type="term" value="C:cytoplasm"/>
    <property type="evidence" value="ECO:0000250"/>
    <property type="project" value="UniProtKB"/>
</dbReference>
<dbReference type="GO" id="GO:0030027">
    <property type="term" value="C:lamellipodium"/>
    <property type="evidence" value="ECO:0000250"/>
    <property type="project" value="UniProtKB"/>
</dbReference>
<dbReference type="GO" id="GO:0005634">
    <property type="term" value="C:nucleus"/>
    <property type="evidence" value="ECO:0007669"/>
    <property type="project" value="UniProtKB-SubCell"/>
</dbReference>
<dbReference type="GO" id="GO:0001726">
    <property type="term" value="C:ruffle"/>
    <property type="evidence" value="ECO:0000250"/>
    <property type="project" value="UniProtKB"/>
</dbReference>
<dbReference type="GO" id="GO:0005524">
    <property type="term" value="F:ATP binding"/>
    <property type="evidence" value="ECO:0007669"/>
    <property type="project" value="UniProtKB-KW"/>
</dbReference>
<dbReference type="GO" id="GO:0003677">
    <property type="term" value="F:DNA binding"/>
    <property type="evidence" value="ECO:0000250"/>
    <property type="project" value="UniProtKB"/>
</dbReference>
<dbReference type="GO" id="GO:0051880">
    <property type="term" value="F:G-quadruplex DNA binding"/>
    <property type="evidence" value="ECO:0000250"/>
    <property type="project" value="UniProtKB"/>
</dbReference>
<dbReference type="GO" id="GO:0046872">
    <property type="term" value="F:metal ion binding"/>
    <property type="evidence" value="ECO:0007669"/>
    <property type="project" value="UniProtKB-KW"/>
</dbReference>
<dbReference type="GO" id="GO:0004550">
    <property type="term" value="F:nucleoside diphosphate kinase activity"/>
    <property type="evidence" value="ECO:0000250"/>
    <property type="project" value="UniProtKB"/>
</dbReference>
<dbReference type="GO" id="GO:0004673">
    <property type="term" value="F:protein histidine kinase activity"/>
    <property type="evidence" value="ECO:0007669"/>
    <property type="project" value="UniProtKB-EC"/>
</dbReference>
<dbReference type="GO" id="GO:0006241">
    <property type="term" value="P:CTP biosynthetic process"/>
    <property type="evidence" value="ECO:0007669"/>
    <property type="project" value="InterPro"/>
</dbReference>
<dbReference type="GO" id="GO:0006183">
    <property type="term" value="P:GTP biosynthetic process"/>
    <property type="evidence" value="ECO:0007669"/>
    <property type="project" value="InterPro"/>
</dbReference>
<dbReference type="GO" id="GO:0007229">
    <property type="term" value="P:integrin-mediated signaling pathway"/>
    <property type="evidence" value="ECO:0000250"/>
    <property type="project" value="UniProtKB"/>
</dbReference>
<dbReference type="GO" id="GO:0009142">
    <property type="term" value="P:nucleoside triphosphate biosynthetic process"/>
    <property type="evidence" value="ECO:0000250"/>
    <property type="project" value="UniProtKB"/>
</dbReference>
<dbReference type="GO" id="GO:0045893">
    <property type="term" value="P:positive regulation of DNA-templated transcription"/>
    <property type="evidence" value="ECO:0000250"/>
    <property type="project" value="UniProtKB"/>
</dbReference>
<dbReference type="GO" id="GO:0045944">
    <property type="term" value="P:positive regulation of transcription by RNA polymerase II"/>
    <property type="evidence" value="ECO:0000250"/>
    <property type="project" value="UniProtKB"/>
</dbReference>
<dbReference type="GO" id="GO:0006228">
    <property type="term" value="P:UTP biosynthetic process"/>
    <property type="evidence" value="ECO:0007669"/>
    <property type="project" value="InterPro"/>
</dbReference>
<dbReference type="CDD" id="cd04413">
    <property type="entry name" value="NDPk_I"/>
    <property type="match status" value="1"/>
</dbReference>
<dbReference type="FunFam" id="3.30.70.141:FF:000039">
    <property type="entry name" value="Nucleoside diphosphate kinase B"/>
    <property type="match status" value="1"/>
</dbReference>
<dbReference type="Gene3D" id="3.30.70.141">
    <property type="entry name" value="Nucleoside diphosphate kinase-like domain"/>
    <property type="match status" value="1"/>
</dbReference>
<dbReference type="HAMAP" id="MF_00451">
    <property type="entry name" value="NDP_kinase"/>
    <property type="match status" value="1"/>
</dbReference>
<dbReference type="InterPro" id="IPR034907">
    <property type="entry name" value="NDK-like_dom"/>
</dbReference>
<dbReference type="InterPro" id="IPR036850">
    <property type="entry name" value="NDK-like_dom_sf"/>
</dbReference>
<dbReference type="InterPro" id="IPR001564">
    <property type="entry name" value="Nucleoside_diP_kinase"/>
</dbReference>
<dbReference type="InterPro" id="IPR023005">
    <property type="entry name" value="Nucleoside_diP_kinase_AS"/>
</dbReference>
<dbReference type="NCBIfam" id="NF001908">
    <property type="entry name" value="PRK00668.1"/>
    <property type="match status" value="1"/>
</dbReference>
<dbReference type="PANTHER" id="PTHR11349">
    <property type="entry name" value="NUCLEOSIDE DIPHOSPHATE KINASE"/>
    <property type="match status" value="1"/>
</dbReference>
<dbReference type="Pfam" id="PF00334">
    <property type="entry name" value="NDK"/>
    <property type="match status" value="1"/>
</dbReference>
<dbReference type="PRINTS" id="PR01243">
    <property type="entry name" value="NUCDPKINASE"/>
</dbReference>
<dbReference type="SMART" id="SM00562">
    <property type="entry name" value="NDK"/>
    <property type="match status" value="1"/>
</dbReference>
<dbReference type="SUPFAM" id="SSF54919">
    <property type="entry name" value="Nucleoside diphosphate kinase, NDK"/>
    <property type="match status" value="1"/>
</dbReference>
<dbReference type="PROSITE" id="PS00469">
    <property type="entry name" value="NDPK"/>
    <property type="match status" value="1"/>
</dbReference>
<dbReference type="PROSITE" id="PS51374">
    <property type="entry name" value="NDPK_LIKE"/>
    <property type="match status" value="1"/>
</dbReference>
<protein>
    <recommendedName>
        <fullName>Nucleoside diphosphate kinase B</fullName>
        <shortName>NDK B</shortName>
        <shortName>NDP kinase B</shortName>
        <ecNumber evidence="1">2.7.4.6</ecNumber>
    </recommendedName>
    <alternativeName>
        <fullName>Histidine protein kinase NDKB</fullName>
        <ecNumber evidence="1">2.7.13.3</ecNumber>
    </alternativeName>
    <alternativeName>
        <fullName>nm23-C2</fullName>
    </alternativeName>
</protein>
<accession>Q50KA8</accession>
<name>NDKB_CANLF</name>
<reference key="1">
    <citation type="journal article" date="2005" name="J. Vet. Med. Sci.">
        <title>Molecular cloning of canine nm23 cDNAs and their expression in normal and tumor tissues.</title>
        <authorList>
            <person name="Takahashi M."/>
            <person name="Une R."/>
            <person name="Fukushima K."/>
            <person name="Fujiki M."/>
            <person name="Misumi K."/>
            <person name="Miyoshi N."/>
            <person name="Endo Y."/>
            <person name="Ohishi A."/>
            <person name="Akuzawa M."/>
        </authorList>
    </citation>
    <scope>NUCLEOTIDE SEQUENCE [MRNA]</scope>
    <scope>TISSUE SPECIFICITY</scope>
    <source>
        <tissue>Peripheral blood leukocyte</tissue>
    </source>
</reference>
<sequence>MAHQERTFIAIKPDGVQRGLVGDIVKRFEQKGFRLVAMKFLRASEDLLKEHYIDLKDRPFYPGLVKYMHSGPVVAMVWEGLNVVKTGRMMLGETNPADSKPGTIRGDFCIQVGRNIIHGSDSVKSAEKEISLWFKPEELVDYKSCAFDWIYE</sequence>
<evidence type="ECO:0000250" key="1">
    <source>
        <dbReference type="UniProtKB" id="P22392"/>
    </source>
</evidence>
<evidence type="ECO:0000250" key="2">
    <source>
        <dbReference type="UniProtKB" id="P36010"/>
    </source>
</evidence>
<evidence type="ECO:0000250" key="3">
    <source>
        <dbReference type="UniProtKB" id="Q01768"/>
    </source>
</evidence>
<evidence type="ECO:0000269" key="4">
    <source>
    </source>
</evidence>
<evidence type="ECO:0000305" key="5"/>
<keyword id="KW-0067">ATP-binding</keyword>
<keyword id="KW-0966">Cell projection</keyword>
<keyword id="KW-0963">Cytoplasm</keyword>
<keyword id="KW-0238">DNA-binding</keyword>
<keyword id="KW-0418">Kinase</keyword>
<keyword id="KW-0460">Magnesium</keyword>
<keyword id="KW-0479">Metal-binding</keyword>
<keyword id="KW-0546">Nucleotide metabolism</keyword>
<keyword id="KW-0547">Nucleotide-binding</keyword>
<keyword id="KW-0539">Nucleus</keyword>
<keyword id="KW-1185">Reference proteome</keyword>
<keyword id="KW-0804">Transcription</keyword>
<keyword id="KW-0805">Transcription regulation</keyword>
<keyword id="KW-0808">Transferase</keyword>
<comment type="function">
    <text evidence="1 2">Major role in the synthesis of nucleoside triphosphates other than ATP. The ATP gamma phosphate is transferred to the NDP beta phosphate via a ping-pong mechanism, using a phosphorylated active-site intermediate (By similarity). Negatively regulates Rho activity by interacting with AKAP13/LBC. Acts as a transcriptional activator of the MYC gene; binds DNA non-specifically. Binds to both single-stranded guanine- and cytosine-rich strands within the nuclease hypersensitive element (NHE) III(1) region of the MYC gene promoter. Does not bind to duplex NHE III(1). Has G-quadruplex (G4) DNA-binding activity, which is independent of its nucleotide-binding and kinase activity. Binds both folded and unfolded G4 with similar low nanomolar affinities. Stabilizes folded G4s regardless of whether they are prefolded or not. Exhibits histidine protein kinase activity (By similarity).</text>
</comment>
<comment type="catalytic activity">
    <reaction evidence="1">
        <text>a 2'-deoxyribonucleoside 5'-diphosphate + ATP = a 2'-deoxyribonucleoside 5'-triphosphate + ADP</text>
        <dbReference type="Rhea" id="RHEA:44640"/>
        <dbReference type="ChEBI" id="CHEBI:30616"/>
        <dbReference type="ChEBI" id="CHEBI:61560"/>
        <dbReference type="ChEBI" id="CHEBI:73316"/>
        <dbReference type="ChEBI" id="CHEBI:456216"/>
        <dbReference type="EC" id="2.7.4.6"/>
    </reaction>
</comment>
<comment type="catalytic activity">
    <reaction evidence="1">
        <text>a ribonucleoside 5'-diphosphate + ATP = a ribonucleoside 5'-triphosphate + ADP</text>
        <dbReference type="Rhea" id="RHEA:18113"/>
        <dbReference type="ChEBI" id="CHEBI:30616"/>
        <dbReference type="ChEBI" id="CHEBI:57930"/>
        <dbReference type="ChEBI" id="CHEBI:61557"/>
        <dbReference type="ChEBI" id="CHEBI:456216"/>
        <dbReference type="EC" id="2.7.4.6"/>
    </reaction>
</comment>
<comment type="catalytic activity">
    <reaction evidence="1">
        <text>ATP + protein L-histidine = ADP + protein N-phospho-L-histidine.</text>
        <dbReference type="EC" id="2.7.13.3"/>
    </reaction>
</comment>
<comment type="cofactor">
    <cofactor evidence="1">
        <name>Mg(2+)</name>
        <dbReference type="ChEBI" id="CHEBI:18420"/>
    </cofactor>
</comment>
<comment type="subunit">
    <text evidence="1 3">Hexamer of two different chains: A and B (A6, A5B, A4B2, A3B3, A2B4, AB5, B6) (By similarity). Interacts with CAPN8 (By similarity). Interacts with AKAP13 (By similarity). Interacts with ITGB1BP1 (via C-terminal domain region) (By similarity). Interacts with BCL2L10 (By similarity).</text>
</comment>
<comment type="subcellular location">
    <subcellularLocation>
        <location evidence="1">Cytoplasm</location>
    </subcellularLocation>
    <subcellularLocation>
        <location evidence="1">Cell projection</location>
        <location evidence="1">Lamellipodium</location>
    </subcellularLocation>
    <subcellularLocation>
        <location evidence="1">Cell projection</location>
        <location evidence="1">Ruffle</location>
    </subcellularLocation>
    <subcellularLocation>
        <location evidence="1">Nucleus</location>
    </subcellularLocation>
    <text evidence="1">Colocalizes with ITGB1 and ITGB1BP1 at the edge or peripheral ruffles and lamellipodia during the early stages of cell spreading on fibronectin or collagen but not on vitronectin or laminin substrates.</text>
</comment>
<comment type="tissue specificity">
    <text evidence="4">Ubiquitous.</text>
</comment>
<comment type="similarity">
    <text evidence="5">Belongs to the NDK family.</text>
</comment>
<proteinExistence type="evidence at transcript level"/>
<feature type="chain" id="PRO_0000250200" description="Nucleoside diphosphate kinase B">
    <location>
        <begin position="1"/>
        <end position="152"/>
    </location>
</feature>
<feature type="region of interest" description="Interaction with AKAP13" evidence="1">
    <location>
        <begin position="1"/>
        <end position="66"/>
    </location>
</feature>
<feature type="active site" description="Pros-phosphohistidine intermediate" evidence="1">
    <location>
        <position position="118"/>
    </location>
</feature>
<feature type="binding site" evidence="1">
    <location>
        <position position="12"/>
    </location>
    <ligand>
        <name>ATP</name>
        <dbReference type="ChEBI" id="CHEBI:30616"/>
    </ligand>
</feature>
<feature type="binding site" evidence="1">
    <location>
        <position position="60"/>
    </location>
    <ligand>
        <name>ATP</name>
        <dbReference type="ChEBI" id="CHEBI:30616"/>
    </ligand>
</feature>
<feature type="binding site" evidence="1">
    <location>
        <position position="88"/>
    </location>
    <ligand>
        <name>ATP</name>
        <dbReference type="ChEBI" id="CHEBI:30616"/>
    </ligand>
</feature>
<feature type="binding site" evidence="1">
    <location>
        <position position="94"/>
    </location>
    <ligand>
        <name>ATP</name>
        <dbReference type="ChEBI" id="CHEBI:30616"/>
    </ligand>
</feature>
<feature type="binding site" evidence="1">
    <location>
        <position position="105"/>
    </location>
    <ligand>
        <name>ATP</name>
        <dbReference type="ChEBI" id="CHEBI:30616"/>
    </ligand>
</feature>
<feature type="binding site" evidence="1">
    <location>
        <position position="115"/>
    </location>
    <ligand>
        <name>ATP</name>
        <dbReference type="ChEBI" id="CHEBI:30616"/>
    </ligand>
</feature>
<gene>
    <name type="primary">NME2</name>
    <name type="synonym">NM23B</name>
</gene>
<organism>
    <name type="scientific">Canis lupus familiaris</name>
    <name type="common">Dog</name>
    <name type="synonym">Canis familiaris</name>
    <dbReference type="NCBI Taxonomy" id="9615"/>
    <lineage>
        <taxon>Eukaryota</taxon>
        <taxon>Metazoa</taxon>
        <taxon>Chordata</taxon>
        <taxon>Craniata</taxon>
        <taxon>Vertebrata</taxon>
        <taxon>Euteleostomi</taxon>
        <taxon>Mammalia</taxon>
        <taxon>Eutheria</taxon>
        <taxon>Laurasiatheria</taxon>
        <taxon>Carnivora</taxon>
        <taxon>Caniformia</taxon>
        <taxon>Canidae</taxon>
        <taxon>Canis</taxon>
    </lineage>
</organism>